<organism evidence="8">
    <name type="scientific">Podospora anserina</name>
    <name type="common">Pleurage anserina</name>
    <dbReference type="NCBI Taxonomy" id="2587412"/>
    <lineage>
        <taxon>Eukaryota</taxon>
        <taxon>Fungi</taxon>
        <taxon>Dikarya</taxon>
        <taxon>Ascomycota</taxon>
        <taxon>Pezizomycotina</taxon>
        <taxon>Sordariomycetes</taxon>
        <taxon>Sordariomycetidae</taxon>
        <taxon>Sordariales</taxon>
        <taxon>Podosporaceae</taxon>
        <taxon>Podospora</taxon>
    </lineage>
</organism>
<protein>
    <recommendedName>
        <fullName evidence="7">Meiotic driver SPOK3</fullName>
    </recommendedName>
    <alternativeName>
        <fullName evidence="6">Spore killer 3</fullName>
    </alternativeName>
</protein>
<sequence length="745" mass="84180">MSDKDRITQLLRELEEAKAREAQERCEKERLQLEHRKTTFLEYLRNCHRHLYNALRLTDTSRSSTGYTKVVGKYYPKRLRPWTNFTNVLHPHYFNLVQQICGQRQLFESASTTKNLGTIISDHLAGNEKAIDRFEVDAVERPVQGILKVLATHEEAGKASICPEFRFSANLRELTQKDDGSSGADDNTSDRSLERRQQAGPNKRPTSKSKYICSNRQPDGVGIRMQPDGGQTQAFIYDYKAAHKVAIEHVRSATAKEHLFHEVVARINDDKLSRDEEVQHREQAEAFIAMALTQVFDYMITYGVSYGYVAAGRCLLLLYVDRDDWQTLYCHPCLPADDVGEPTNDWTDRLSHTAVAQLVSFCLSSFQSEALEGQSLETALSVAKATLKTWSESYADVAYLGLEPAELSSAPSSQNTDISEYTSKAKPTGRKVTLRSCKPAAVLPQGNEHDEHDEEDHSEPGASRLAKRERGPSSGGKDDGRSMVDPQPTRQYCTQACLLGLKRGKDLDENCPNVSLHRFDGSSRHPVNAHSFTDMVEQQLLLSPYKGCRMVDFWGKRGAMGWLFKLELLPYGYTFVGKGTVEDRLNRLEHEGRVYARLDHLQGDVVPVHLGLVRLDRGYILPGLEFAVYMMLMSWAGQTPSANMDDAETLKSESLTAIWSEGVDHGDNNRANYLWNAERCRIMIIDFDRAHLFPPLKARAVSRLSKPKRKRETLNSYLTEITGREARHVFKQMDRSPMATPSHGG</sequence>
<proteinExistence type="evidence at protein level"/>
<accession>A0A516F180</accession>
<keyword id="KW-0175">Coiled coil</keyword>
<keyword id="KW-0963">Cytoplasm</keyword>
<keyword id="KW-0539">Nucleus</keyword>
<keyword id="KW-0800">Toxin</keyword>
<comment type="function">
    <text evidence="1 5">Promotes unequal transmission of alleles from the parental zygote to progeny spores by acting as poison/antidote system, leading to poisoning of progeny that do not inherit the allele (PubMed:31347500). May possess DNA nuclease activity that leads to spore killing, and a kinase activity that confers resistance to the nuclease activity (By similarity).</text>
</comment>
<comment type="subcellular location">
    <subcellularLocation>
        <location evidence="2">Cytoplasm</location>
    </subcellularLocation>
    <subcellularLocation>
        <location evidence="2">Nucleus</location>
    </subcellularLocation>
</comment>
<reference evidence="8" key="1">
    <citation type="journal article" date="2019" name="Elife">
        <title>Combinations of Spok genes create multiple meiotic drivers in Podospora.</title>
        <authorList>
            <person name="Vogan A.A."/>
            <person name="Ament-Velasquez S.L."/>
            <person name="Granger-Farbos A."/>
            <person name="Svedberg J."/>
            <person name="Bastiaans E."/>
            <person name="Debets A.J."/>
            <person name="Coustou V."/>
            <person name="Yvanne H."/>
            <person name="Clave C."/>
            <person name="Saupe S.J."/>
            <person name="Johannesson H."/>
        </authorList>
    </citation>
    <scope>NUCLEOTIDE SEQUENCE [GENOMIC DNA]</scope>
    <scope>FUNCTION</scope>
    <scope>MUTAGENESIS OF LYS-240; 493-CYS--CYS-497; CYS-511 AND ASP-667</scope>
    <source>
        <strain evidence="8">Wa87</strain>
    </source>
</reference>
<evidence type="ECO:0000250" key="1">
    <source>
        <dbReference type="UniProtKB" id="A0A447CCJ8"/>
    </source>
</evidence>
<evidence type="ECO:0000250" key="2">
    <source>
        <dbReference type="UniProtKB" id="B2AFA8"/>
    </source>
</evidence>
<evidence type="ECO:0000255" key="3"/>
<evidence type="ECO:0000256" key="4">
    <source>
        <dbReference type="SAM" id="MobiDB-lite"/>
    </source>
</evidence>
<evidence type="ECO:0000269" key="5">
    <source>
    </source>
</evidence>
<evidence type="ECO:0000303" key="6">
    <source>
    </source>
</evidence>
<evidence type="ECO:0000305" key="7"/>
<evidence type="ECO:0000312" key="8">
    <source>
        <dbReference type="EMBL" id="QDO72523.1"/>
    </source>
</evidence>
<name>SPOK3_PODAS</name>
<feature type="chain" id="PRO_0000453037" description="Meiotic driver SPOK3">
    <location>
        <begin position="1"/>
        <end position="745"/>
    </location>
</feature>
<feature type="region of interest" description="Disordered" evidence="4">
    <location>
        <begin position="173"/>
        <end position="222"/>
    </location>
</feature>
<feature type="region of interest" description="Required for antidote activity" evidence="5">
    <location>
        <begin position="214"/>
        <end position="325"/>
    </location>
</feature>
<feature type="region of interest" description="Disordered" evidence="4">
    <location>
        <begin position="407"/>
        <end position="487"/>
    </location>
</feature>
<feature type="region of interest" description="Required for poison activity" evidence="5">
    <location>
        <begin position="491"/>
        <end position="745"/>
    </location>
</feature>
<feature type="coiled-coil region" evidence="3">
    <location>
        <begin position="4"/>
        <end position="34"/>
    </location>
</feature>
<feature type="compositionally biased region" description="Basic and acidic residues" evidence="4">
    <location>
        <begin position="188"/>
        <end position="197"/>
    </location>
</feature>
<feature type="compositionally biased region" description="Polar residues" evidence="4">
    <location>
        <begin position="208"/>
        <end position="217"/>
    </location>
</feature>
<feature type="compositionally biased region" description="Polar residues" evidence="4">
    <location>
        <begin position="409"/>
        <end position="422"/>
    </location>
</feature>
<feature type="compositionally biased region" description="Basic and acidic residues" evidence="4">
    <location>
        <begin position="466"/>
        <end position="482"/>
    </location>
</feature>
<feature type="mutagenesis site" description="Abolishes poison activity while retaining antidote activity." evidence="5">
    <original>K</original>
    <variation>A</variation>
    <location>
        <position position="240"/>
    </location>
</feature>
<feature type="mutagenesis site" description="Appears to retain poison activity while abolishing antidote activity." evidence="5">
    <original>CTQAC</original>
    <variation>ATQAA</variation>
    <location>
        <begin position="493"/>
        <end position="497"/>
    </location>
</feature>
<feature type="mutagenesis site" description="Appears to retain poison activity while abolishing antidote activity." evidence="5">
    <original>C</original>
    <variation>A</variation>
    <variation>S</variation>
    <location>
        <position position="511"/>
    </location>
</feature>
<feature type="mutagenesis site" description="Appears to retain spore killing activity while abolishing antidote activity." evidence="5">
    <original>D</original>
    <variation>A</variation>
    <location>
        <position position="667"/>
    </location>
</feature>
<gene>
    <name evidence="6" type="primary">SPOK3</name>
</gene>
<dbReference type="EMBL" id="MK521588">
    <property type="protein sequence ID" value="QDO72523.1"/>
    <property type="molecule type" value="Genomic_DNA"/>
</dbReference>
<dbReference type="VEuPathDB" id="FungiDB:PODANS_5_10"/>
<dbReference type="GO" id="GO:0005737">
    <property type="term" value="C:cytoplasm"/>
    <property type="evidence" value="ECO:0000250"/>
    <property type="project" value="UniProtKB"/>
</dbReference>
<dbReference type="GO" id="GO:0005634">
    <property type="term" value="C:nucleus"/>
    <property type="evidence" value="ECO:0000250"/>
    <property type="project" value="UniProtKB"/>
</dbReference>
<dbReference type="GO" id="GO:0004536">
    <property type="term" value="F:DNA nuclease activity"/>
    <property type="evidence" value="ECO:0000250"/>
    <property type="project" value="UniProtKB"/>
</dbReference>
<dbReference type="GO" id="GO:0016301">
    <property type="term" value="F:kinase activity"/>
    <property type="evidence" value="ECO:0000250"/>
    <property type="project" value="UniProtKB"/>
</dbReference>
<dbReference type="GO" id="GO:0090729">
    <property type="term" value="F:toxin activity"/>
    <property type="evidence" value="ECO:0007669"/>
    <property type="project" value="UniProtKB-KW"/>
</dbReference>
<dbReference type="GO" id="GO:0110134">
    <property type="term" value="P:meiotic drive"/>
    <property type="evidence" value="ECO:0000314"/>
    <property type="project" value="UniProtKB"/>
</dbReference>
<dbReference type="InterPro" id="IPR011009">
    <property type="entry name" value="Kinase-like_dom_sf"/>
</dbReference>
<dbReference type="SUPFAM" id="SSF56112">
    <property type="entry name" value="Protein kinase-like (PK-like)"/>
    <property type="match status" value="1"/>
</dbReference>